<accession>A6WZX3</accession>
<evidence type="ECO:0000255" key="1">
    <source>
        <dbReference type="HAMAP-Rule" id="MF_01522"/>
    </source>
</evidence>
<sequence length="651" mass="70609">MSGELNGNDTPTQAAMPAVGVPESVAFAEDAEQHNESMKTLVLGALGVVYGDIGTSPIYAFREALHAAASDGILARSDILGVVSLIFWALTLVVTIKYVLFVLRADNNGEGGILSLMALVRGALKGRPDLILGVGICGAALFFGDAVITPAISVLSAMEGLEIVAPDLTPFVVPITVVILVTLFSVQKLGTGKVAIVFGPIMALWFLALGASGLWHIFDDPTVMVALNPYYAVRFLMISPGIAFITVGAVFLAMTGAEALYADLGHFGRKPIVRAWLWIVFPCLLLNYFGQAAFILSHGEAAALPFFQMMPSFALLPMVLLATAATVIASQAVITGAYSVARQAVQLNILPRLEIQHTSEKLHGQIYIPRVNLLLGLAVVILVLGFEKSSNLAAAYGIAVTGNMLVTTVLLYIVMTRIWNWRVSRALPIIVGFLIIDIMFFGANIIKVHEGGWASIGIAAILVLIMWTWVRGTRHLFNKTRKAEVPLDLIVQQMTKRPPTIVPGTAVFLTGDPKSAPTALMHSLKHYKVLHENNVILTVVTASKPWVSSADRARVSQYNERFMQVTLTFGYMQQPNIPRALGICRKLGWKFDIMTTSFFLSRRSLKASAHSGLPLWQDKLFILLARTASDATEYFQIPTGRVVEIGTQVNL</sequence>
<organism>
    <name type="scientific">Brucella anthropi (strain ATCC 49188 / DSM 6882 / CCUG 24695 / JCM 21032 / LMG 3331 / NBRC 15819 / NCTC 12168 / Alc 37)</name>
    <name type="common">Ochrobactrum anthropi</name>
    <dbReference type="NCBI Taxonomy" id="439375"/>
    <lineage>
        <taxon>Bacteria</taxon>
        <taxon>Pseudomonadati</taxon>
        <taxon>Pseudomonadota</taxon>
        <taxon>Alphaproteobacteria</taxon>
        <taxon>Hyphomicrobiales</taxon>
        <taxon>Brucellaceae</taxon>
        <taxon>Brucella/Ochrobactrum group</taxon>
        <taxon>Brucella</taxon>
    </lineage>
</organism>
<comment type="function">
    <text evidence="1">Transport of potassium into the cell. Likely operates as a K(+):H(+) symporter.</text>
</comment>
<comment type="catalytic activity">
    <reaction evidence="1">
        <text>K(+)(in) + H(+)(in) = K(+)(out) + H(+)(out)</text>
        <dbReference type="Rhea" id="RHEA:28490"/>
        <dbReference type="ChEBI" id="CHEBI:15378"/>
        <dbReference type="ChEBI" id="CHEBI:29103"/>
    </reaction>
    <physiologicalReaction direction="right-to-left" evidence="1">
        <dbReference type="Rhea" id="RHEA:28492"/>
    </physiologicalReaction>
</comment>
<comment type="subcellular location">
    <subcellularLocation>
        <location evidence="1">Cell inner membrane</location>
        <topology evidence="1">Multi-pass membrane protein</topology>
    </subcellularLocation>
</comment>
<comment type="similarity">
    <text evidence="1">Belongs to the HAK/KUP transporter (TC 2.A.72) family.</text>
</comment>
<dbReference type="EMBL" id="CP000758">
    <property type="protein sequence ID" value="ABS14527.1"/>
    <property type="molecule type" value="Genomic_DNA"/>
</dbReference>
<dbReference type="RefSeq" id="WP_010659779.1">
    <property type="nucleotide sequence ID" value="NC_009667.1"/>
</dbReference>
<dbReference type="STRING" id="439375.Oant_1811"/>
<dbReference type="KEGG" id="oan:Oant_1811"/>
<dbReference type="eggNOG" id="COG3158">
    <property type="taxonomic scope" value="Bacteria"/>
</dbReference>
<dbReference type="HOGENOM" id="CLU_008142_4_2_5"/>
<dbReference type="PhylomeDB" id="A6WZX3"/>
<dbReference type="Proteomes" id="UP000002301">
    <property type="component" value="Chromosome 1"/>
</dbReference>
<dbReference type="GO" id="GO:0005886">
    <property type="term" value="C:plasma membrane"/>
    <property type="evidence" value="ECO:0007669"/>
    <property type="project" value="UniProtKB-SubCell"/>
</dbReference>
<dbReference type="GO" id="GO:0015079">
    <property type="term" value="F:potassium ion transmembrane transporter activity"/>
    <property type="evidence" value="ECO:0007669"/>
    <property type="project" value="UniProtKB-UniRule"/>
</dbReference>
<dbReference type="GO" id="GO:0015293">
    <property type="term" value="F:symporter activity"/>
    <property type="evidence" value="ECO:0007669"/>
    <property type="project" value="UniProtKB-UniRule"/>
</dbReference>
<dbReference type="HAMAP" id="MF_01522">
    <property type="entry name" value="Kup"/>
    <property type="match status" value="1"/>
</dbReference>
<dbReference type="InterPro" id="IPR003855">
    <property type="entry name" value="K+_transporter"/>
</dbReference>
<dbReference type="InterPro" id="IPR053952">
    <property type="entry name" value="K_trans_C"/>
</dbReference>
<dbReference type="InterPro" id="IPR053951">
    <property type="entry name" value="K_trans_N"/>
</dbReference>
<dbReference type="InterPro" id="IPR023051">
    <property type="entry name" value="Kup"/>
</dbReference>
<dbReference type="PANTHER" id="PTHR30540:SF79">
    <property type="entry name" value="LOW AFFINITY POTASSIUM TRANSPORT SYSTEM PROTEIN KUP"/>
    <property type="match status" value="1"/>
</dbReference>
<dbReference type="PANTHER" id="PTHR30540">
    <property type="entry name" value="OSMOTIC STRESS POTASSIUM TRANSPORTER"/>
    <property type="match status" value="1"/>
</dbReference>
<dbReference type="Pfam" id="PF02705">
    <property type="entry name" value="K_trans"/>
    <property type="match status" value="1"/>
</dbReference>
<dbReference type="Pfam" id="PF22776">
    <property type="entry name" value="K_trans_C"/>
    <property type="match status" value="1"/>
</dbReference>
<protein>
    <recommendedName>
        <fullName evidence="1">Probable potassium transport system protein Kup</fullName>
    </recommendedName>
</protein>
<name>KUP_BRUA4</name>
<keyword id="KW-0997">Cell inner membrane</keyword>
<keyword id="KW-1003">Cell membrane</keyword>
<keyword id="KW-0406">Ion transport</keyword>
<keyword id="KW-0472">Membrane</keyword>
<keyword id="KW-0630">Potassium</keyword>
<keyword id="KW-0633">Potassium transport</keyword>
<keyword id="KW-1185">Reference proteome</keyword>
<keyword id="KW-0769">Symport</keyword>
<keyword id="KW-0812">Transmembrane</keyword>
<keyword id="KW-1133">Transmembrane helix</keyword>
<keyword id="KW-0813">Transport</keyword>
<gene>
    <name evidence="1" type="primary">kup</name>
    <name type="ordered locus">Oant_1811</name>
</gene>
<reference key="1">
    <citation type="journal article" date="2011" name="J. Bacteriol.">
        <title>Genome of Ochrobactrum anthropi ATCC 49188 T, a versatile opportunistic pathogen and symbiont of several eukaryotic hosts.</title>
        <authorList>
            <person name="Chain P.S."/>
            <person name="Lang D.M."/>
            <person name="Comerci D.J."/>
            <person name="Malfatti S.A."/>
            <person name="Vergez L.M."/>
            <person name="Shin M."/>
            <person name="Ugalde R.A."/>
            <person name="Garcia E."/>
            <person name="Tolmasky M.E."/>
        </authorList>
    </citation>
    <scope>NUCLEOTIDE SEQUENCE [LARGE SCALE GENOMIC DNA]</scope>
    <source>
        <strain>ATCC 49188 / DSM 6882 / CCUG 24695 / JCM 21032 / LMG 3331 / NBRC 15819 / NCTC 12168 / Alc 37</strain>
    </source>
</reference>
<feature type="chain" id="PRO_1000068650" description="Probable potassium transport system protein Kup">
    <location>
        <begin position="1"/>
        <end position="651"/>
    </location>
</feature>
<feature type="transmembrane region" description="Helical" evidence="1">
    <location>
        <begin position="41"/>
        <end position="61"/>
    </location>
</feature>
<feature type="transmembrane region" description="Helical" evidence="1">
    <location>
        <begin position="82"/>
        <end position="102"/>
    </location>
</feature>
<feature type="transmembrane region" description="Helical" evidence="1">
    <location>
        <begin position="130"/>
        <end position="150"/>
    </location>
</feature>
<feature type="transmembrane region" description="Helical" evidence="1">
    <location>
        <begin position="163"/>
        <end position="183"/>
    </location>
</feature>
<feature type="transmembrane region" description="Helical" evidence="1">
    <location>
        <begin position="194"/>
        <end position="214"/>
    </location>
</feature>
<feature type="transmembrane region" description="Helical" evidence="1">
    <location>
        <begin position="235"/>
        <end position="255"/>
    </location>
</feature>
<feature type="transmembrane region" description="Helical" evidence="1">
    <location>
        <begin position="276"/>
        <end position="296"/>
    </location>
</feature>
<feature type="transmembrane region" description="Helical" evidence="1">
    <location>
        <begin position="309"/>
        <end position="329"/>
    </location>
</feature>
<feature type="transmembrane region" description="Helical" evidence="1">
    <location>
        <begin position="366"/>
        <end position="386"/>
    </location>
</feature>
<feature type="transmembrane region" description="Helical" evidence="1">
    <location>
        <begin position="395"/>
        <end position="415"/>
    </location>
</feature>
<feature type="transmembrane region" description="Helical" evidence="1">
    <location>
        <begin position="426"/>
        <end position="446"/>
    </location>
</feature>
<feature type="transmembrane region" description="Helical" evidence="1">
    <location>
        <begin position="450"/>
        <end position="470"/>
    </location>
</feature>
<proteinExistence type="inferred from homology"/>